<reference key="1">
    <citation type="journal article" date="2018" name="Angew. Chem. Int. Ed.">
        <title>Genome mining and comparative biosynthesis of meroterpenoids from two phylogenetically distinct fungi.</title>
        <authorList>
            <person name="Zhang X."/>
            <person name="Wang T.T."/>
            <person name="Xu Q.L."/>
            <person name="Xiong Y."/>
            <person name="Zhang L."/>
            <person name="Han H."/>
            <person name="Xu K."/>
            <person name="Guo W.J."/>
            <person name="Xu Q."/>
            <person name="Tan R.X."/>
            <person name="Ge H.M."/>
        </authorList>
    </citation>
    <scope>NUCLEOTIDE SEQUENCE [MRNA]</scope>
    <scope>FUNCTION</scope>
    <scope>PATHWAY</scope>
    <source>
        <strain>Z14-w</strain>
    </source>
</reference>
<proteinExistence type="evidence at transcript level"/>
<accession>A0A455LLW9</accession>
<feature type="chain" id="PRO_0000452555" description="FAD-dependent monooxygenase ntnJ">
    <location>
        <begin position="1"/>
        <end position="420"/>
    </location>
</feature>
<feature type="transmembrane region" description="Helical" evidence="4">
    <location>
        <begin position="12"/>
        <end position="31"/>
    </location>
</feature>
<feature type="active site" evidence="3">
    <location>
        <position position="187"/>
    </location>
</feature>
<feature type="binding site" evidence="2">
    <location>
        <position position="41"/>
    </location>
    <ligand>
        <name>FAD</name>
        <dbReference type="ChEBI" id="CHEBI:57692"/>
    </ligand>
</feature>
<feature type="binding site" evidence="2">
    <location>
        <position position="54"/>
    </location>
    <ligand>
        <name>FAD</name>
        <dbReference type="ChEBI" id="CHEBI:57692"/>
    </ligand>
</feature>
<feature type="binding site" evidence="2">
    <location>
        <position position="302"/>
    </location>
    <ligand>
        <name>FAD</name>
        <dbReference type="ChEBI" id="CHEBI:57692"/>
    </ligand>
</feature>
<feature type="binding site" evidence="2">
    <location>
        <position position="315"/>
    </location>
    <ligand>
        <name>FAD</name>
        <dbReference type="ChEBI" id="CHEBI:57692"/>
    </ligand>
</feature>
<feature type="glycosylation site" description="N-linked (GlcNAc...) asparagine" evidence="5">
    <location>
        <position position="124"/>
    </location>
</feature>
<feature type="glycosylation site" description="N-linked (GlcNAc...) asparagine" evidence="5">
    <location>
        <position position="264"/>
    </location>
</feature>
<gene>
    <name evidence="7" type="primary">ntnJ</name>
</gene>
<comment type="function">
    <text evidence="6 9">FAD-dependent monooxygenase; part of the gene cluster that mediates the biosynthesis of the meroterpenoids nectripenoids A and B, as well as cochliquninone D and isocochliquninone E (PubMed:29797385). The pathway probably begins with the HR-PKS ntnH that catalyzes two chain-extension steps to form a reduced triketide, which then primes the SAT domain in the NR-PKS ntnG to initiate three more cycles of extension to give a linear hexaketide corresponding to the polyketide part of nectripenoids (Probable). The FAD-dependent monooxygenase ntnJ then performs an oxidative decarboxylation at C11 of the ntnH/ntnG product, via an electrophilic aromatic hydroxylation with concomitant ipso-decarboxylation (Probable). The membrane-bound polyprenyl transferase ntnF then introduces a farnesyl group before the FAD-dependent monooxygenase ntnK functions as the first epoxidase on terminal C12'-C13' olefin, followed by a second epoxidation on C7'-C8' catalyzed by ntnA (Probable). The terpene cyclase/mutase ntnI then initiates the sequential tricyclic ring formation through protonation of the terminal epoxide and catalyzes the regioselective and stereoselective 6/6/6-tricyclic ring formation (Probable). The cytochrome P450 monooxygenase ntnM may then hydroxylate C1' (Probable).</text>
</comment>
<comment type="cofactor">
    <cofactor evidence="1">
        <name>FAD</name>
        <dbReference type="ChEBI" id="CHEBI:57692"/>
    </cofactor>
</comment>
<comment type="pathway">
    <text evidence="9">Secondary metabolite biosynthesis; terpenoid biosynthesis.</text>
</comment>
<comment type="subcellular location">
    <subcellularLocation>
        <location evidence="4">Membrane</location>
        <topology evidence="4">Single-pass membrane protein</topology>
    </subcellularLocation>
</comment>
<comment type="similarity">
    <text evidence="8">Belongs to the paxM FAD-dependent monooxygenase family.</text>
</comment>
<sequence>MSNKHSACQVQFRVIVVGAGIGGLSAAVALANRGHSVLVLESTTKLSHVGAGVALPPTTRKWYESEGVLRAESGCIPLDGIELRKWDTGELVTRTAANPIGKQNAIHHGDMQQALLARAAQLDNISIRLGARVMDIDIDSNTVLLHNGEQVEGDVIIAADGVKSVIKPKICPPGASKAQSTGEAAYRFTLARDLLKDDEELLDLVQRSWATRWDGPSRHVVAYPVRNHQLLNVVLIHPDDGNTEESWTTVADKQDVIEHYQDWNLTLNKLIHLAPTQVPNFRMFLYPPSPVWVKGSTILLGDACHAMLPYLGQGVGQAADDAVAIATVLSTIEHREQLPLALQAYEVSRKSRVEQIQAATYQAREHLHLKDREAQAARDLQRKSASESNQNSDVVKMQHSYWVWDAAKVAQIALTELITG</sequence>
<organism>
    <name type="scientific">Nectria sp</name>
    <dbReference type="NCBI Taxonomy" id="1755444"/>
    <lineage>
        <taxon>Eukaryota</taxon>
        <taxon>Fungi</taxon>
        <taxon>Dikarya</taxon>
        <taxon>Ascomycota</taxon>
        <taxon>Pezizomycotina</taxon>
        <taxon>Sordariomycetes</taxon>
        <taxon>Hypocreomycetidae</taxon>
        <taxon>Hypocreales</taxon>
        <taxon>Nectriaceae</taxon>
        <taxon>Nectria</taxon>
    </lineage>
</organism>
<protein>
    <recommendedName>
        <fullName evidence="7">FAD-dependent monooxygenase ntnJ</fullName>
        <ecNumber evidence="9">1.-.-.-</ecNumber>
    </recommendedName>
    <alternativeName>
        <fullName evidence="7">Nectripenoid biosynthesis cluster protein J</fullName>
    </alternativeName>
</protein>
<evidence type="ECO:0000250" key="1">
    <source>
        <dbReference type="UniProtKB" id="A6T923"/>
    </source>
</evidence>
<evidence type="ECO:0000250" key="2">
    <source>
        <dbReference type="UniProtKB" id="B8M9J8"/>
    </source>
</evidence>
<evidence type="ECO:0000250" key="3">
    <source>
        <dbReference type="UniProtKB" id="L0E4H0"/>
    </source>
</evidence>
<evidence type="ECO:0000255" key="4"/>
<evidence type="ECO:0000255" key="5">
    <source>
        <dbReference type="PROSITE-ProRule" id="PRU00498"/>
    </source>
</evidence>
<evidence type="ECO:0000269" key="6">
    <source>
    </source>
</evidence>
<evidence type="ECO:0000303" key="7">
    <source>
    </source>
</evidence>
<evidence type="ECO:0000305" key="8"/>
<evidence type="ECO:0000305" key="9">
    <source>
    </source>
</evidence>
<dbReference type="EC" id="1.-.-.-" evidence="9"/>
<dbReference type="EMBL" id="MH183004">
    <property type="protein sequence ID" value="AYO60871.1"/>
    <property type="molecule type" value="mRNA"/>
</dbReference>
<dbReference type="SMR" id="A0A455LLW9"/>
<dbReference type="GlyCosmos" id="A0A455LLW9">
    <property type="glycosylation" value="2 sites, No reported glycans"/>
</dbReference>
<dbReference type="UniPathway" id="UPA00213"/>
<dbReference type="GO" id="GO:0016020">
    <property type="term" value="C:membrane"/>
    <property type="evidence" value="ECO:0007669"/>
    <property type="project" value="UniProtKB-SubCell"/>
</dbReference>
<dbReference type="GO" id="GO:0071949">
    <property type="term" value="F:FAD binding"/>
    <property type="evidence" value="ECO:0007669"/>
    <property type="project" value="InterPro"/>
</dbReference>
<dbReference type="GO" id="GO:0004497">
    <property type="term" value="F:monooxygenase activity"/>
    <property type="evidence" value="ECO:0007669"/>
    <property type="project" value="UniProtKB-KW"/>
</dbReference>
<dbReference type="GO" id="GO:0016114">
    <property type="term" value="P:terpenoid biosynthetic process"/>
    <property type="evidence" value="ECO:0007669"/>
    <property type="project" value="UniProtKB-UniPathway"/>
</dbReference>
<dbReference type="Gene3D" id="3.50.50.60">
    <property type="entry name" value="FAD/NAD(P)-binding domain"/>
    <property type="match status" value="1"/>
</dbReference>
<dbReference type="InterPro" id="IPR002938">
    <property type="entry name" value="FAD-bd"/>
</dbReference>
<dbReference type="InterPro" id="IPR050493">
    <property type="entry name" value="FAD-dep_Monooxygenase_BioMet"/>
</dbReference>
<dbReference type="InterPro" id="IPR036188">
    <property type="entry name" value="FAD/NAD-bd_sf"/>
</dbReference>
<dbReference type="PANTHER" id="PTHR13789:SF307">
    <property type="entry name" value="HYDROXYLASE, PUTATIVE (AFU_ORTHOLOGUE AFUA_2G04330)-RELATED"/>
    <property type="match status" value="1"/>
</dbReference>
<dbReference type="PANTHER" id="PTHR13789">
    <property type="entry name" value="MONOOXYGENASE"/>
    <property type="match status" value="1"/>
</dbReference>
<dbReference type="Pfam" id="PF01494">
    <property type="entry name" value="FAD_binding_3"/>
    <property type="match status" value="1"/>
</dbReference>
<dbReference type="PRINTS" id="PR00420">
    <property type="entry name" value="RNGMNOXGNASE"/>
</dbReference>
<dbReference type="SUPFAM" id="SSF54373">
    <property type="entry name" value="FAD-linked reductases, C-terminal domain"/>
    <property type="match status" value="1"/>
</dbReference>
<dbReference type="SUPFAM" id="SSF51905">
    <property type="entry name" value="FAD/NAD(P)-binding domain"/>
    <property type="match status" value="1"/>
</dbReference>
<name>NTNJ_NECSZ</name>
<keyword id="KW-0274">FAD</keyword>
<keyword id="KW-0285">Flavoprotein</keyword>
<keyword id="KW-0325">Glycoprotein</keyword>
<keyword id="KW-0472">Membrane</keyword>
<keyword id="KW-0503">Monooxygenase</keyword>
<keyword id="KW-0560">Oxidoreductase</keyword>
<keyword id="KW-0812">Transmembrane</keyword>
<keyword id="KW-1133">Transmembrane helix</keyword>